<sequence>MAIGLVGKKCGMTRVFTEAGASIPVTVVEISANRITQVKNTDVDGYQAIQVTTGTRRDSRVTAAQKGHFAKAGVAAGRGVWEFRANDSDLEGREIGGEILADLFEQGQMVDVTGNSKGKGFQGGVKRHNFSMQDATHGNSVSHRAIGSTGQNQSPGKVFKGKKMPGQMGNKRVTVQGLEVISVDVENGLLVIKGAIPGATGGDVIVRPSVKA</sequence>
<gene>
    <name evidence="1" type="primary">rplC</name>
    <name type="ordered locus">Pcryo_0484</name>
</gene>
<protein>
    <recommendedName>
        <fullName evidence="1">Large ribosomal subunit protein uL3</fullName>
    </recommendedName>
    <alternativeName>
        <fullName evidence="3">50S ribosomal protein L3</fullName>
    </alternativeName>
</protein>
<reference key="1">
    <citation type="submission" date="2006-03" db="EMBL/GenBank/DDBJ databases">
        <title>Complete sequence of chromosome of Psychrobacter cryohalolentis K5.</title>
        <authorList>
            <consortium name="US DOE Joint Genome Institute"/>
            <person name="Copeland A."/>
            <person name="Lucas S."/>
            <person name="Lapidus A."/>
            <person name="Barry K."/>
            <person name="Detter J.C."/>
            <person name="Glavina T."/>
            <person name="Hammon N."/>
            <person name="Israni S."/>
            <person name="Dalin E."/>
            <person name="Tice H."/>
            <person name="Pitluck S."/>
            <person name="Brettin T."/>
            <person name="Bruce D."/>
            <person name="Han C."/>
            <person name="Tapia R."/>
            <person name="Sims D.R."/>
            <person name="Gilna P."/>
            <person name="Schmutz J."/>
            <person name="Larimer F."/>
            <person name="Land M."/>
            <person name="Hauser L."/>
            <person name="Kyrpides N."/>
            <person name="Kim E."/>
            <person name="Richardson P."/>
        </authorList>
    </citation>
    <scope>NUCLEOTIDE SEQUENCE [LARGE SCALE GENOMIC DNA]</scope>
    <source>
        <strain>ATCC BAA-1226 / DSM 17306 / VKM B-2378 / K5</strain>
    </source>
</reference>
<accession>Q1QDI6</accession>
<name>RL3_PSYCK</name>
<keyword id="KW-0488">Methylation</keyword>
<keyword id="KW-0687">Ribonucleoprotein</keyword>
<keyword id="KW-0689">Ribosomal protein</keyword>
<keyword id="KW-0694">RNA-binding</keyword>
<keyword id="KW-0699">rRNA-binding</keyword>
<feature type="chain" id="PRO_0000241394" description="Large ribosomal subunit protein uL3">
    <location>
        <begin position="1"/>
        <end position="212"/>
    </location>
</feature>
<feature type="region of interest" description="Disordered" evidence="2">
    <location>
        <begin position="140"/>
        <end position="166"/>
    </location>
</feature>
<feature type="compositionally biased region" description="Polar residues" evidence="2">
    <location>
        <begin position="140"/>
        <end position="155"/>
    </location>
</feature>
<feature type="modified residue" description="N5-methylglutamine" evidence="1">
    <location>
        <position position="153"/>
    </location>
</feature>
<evidence type="ECO:0000255" key="1">
    <source>
        <dbReference type="HAMAP-Rule" id="MF_01325"/>
    </source>
</evidence>
<evidence type="ECO:0000256" key="2">
    <source>
        <dbReference type="SAM" id="MobiDB-lite"/>
    </source>
</evidence>
<evidence type="ECO:0000305" key="3"/>
<dbReference type="EMBL" id="CP000323">
    <property type="protein sequence ID" value="ABE74267.1"/>
    <property type="molecule type" value="Genomic_DNA"/>
</dbReference>
<dbReference type="RefSeq" id="WP_011512851.1">
    <property type="nucleotide sequence ID" value="NC_007969.1"/>
</dbReference>
<dbReference type="SMR" id="Q1QDI6"/>
<dbReference type="STRING" id="335284.Pcryo_0484"/>
<dbReference type="KEGG" id="pcr:Pcryo_0484"/>
<dbReference type="eggNOG" id="COG0087">
    <property type="taxonomic scope" value="Bacteria"/>
</dbReference>
<dbReference type="HOGENOM" id="CLU_044142_4_1_6"/>
<dbReference type="Proteomes" id="UP000002425">
    <property type="component" value="Chromosome"/>
</dbReference>
<dbReference type="GO" id="GO:0022625">
    <property type="term" value="C:cytosolic large ribosomal subunit"/>
    <property type="evidence" value="ECO:0007669"/>
    <property type="project" value="TreeGrafter"/>
</dbReference>
<dbReference type="GO" id="GO:0019843">
    <property type="term" value="F:rRNA binding"/>
    <property type="evidence" value="ECO:0007669"/>
    <property type="project" value="UniProtKB-UniRule"/>
</dbReference>
<dbReference type="GO" id="GO:0003735">
    <property type="term" value="F:structural constituent of ribosome"/>
    <property type="evidence" value="ECO:0007669"/>
    <property type="project" value="InterPro"/>
</dbReference>
<dbReference type="GO" id="GO:0006412">
    <property type="term" value="P:translation"/>
    <property type="evidence" value="ECO:0007669"/>
    <property type="project" value="UniProtKB-UniRule"/>
</dbReference>
<dbReference type="FunFam" id="2.40.30.10:FF:000004">
    <property type="entry name" value="50S ribosomal protein L3"/>
    <property type="match status" value="1"/>
</dbReference>
<dbReference type="FunFam" id="3.30.160.810:FF:000001">
    <property type="entry name" value="50S ribosomal protein L3"/>
    <property type="match status" value="1"/>
</dbReference>
<dbReference type="Gene3D" id="3.30.160.810">
    <property type="match status" value="1"/>
</dbReference>
<dbReference type="Gene3D" id="2.40.30.10">
    <property type="entry name" value="Translation factors"/>
    <property type="match status" value="1"/>
</dbReference>
<dbReference type="HAMAP" id="MF_01325_B">
    <property type="entry name" value="Ribosomal_uL3_B"/>
    <property type="match status" value="1"/>
</dbReference>
<dbReference type="InterPro" id="IPR000597">
    <property type="entry name" value="Ribosomal_uL3"/>
</dbReference>
<dbReference type="InterPro" id="IPR019927">
    <property type="entry name" value="Ribosomal_uL3_bac/org-type"/>
</dbReference>
<dbReference type="InterPro" id="IPR019926">
    <property type="entry name" value="Ribosomal_uL3_CS"/>
</dbReference>
<dbReference type="InterPro" id="IPR009000">
    <property type="entry name" value="Transl_B-barrel_sf"/>
</dbReference>
<dbReference type="NCBIfam" id="TIGR03625">
    <property type="entry name" value="L3_bact"/>
    <property type="match status" value="1"/>
</dbReference>
<dbReference type="PANTHER" id="PTHR11229">
    <property type="entry name" value="50S RIBOSOMAL PROTEIN L3"/>
    <property type="match status" value="1"/>
</dbReference>
<dbReference type="PANTHER" id="PTHR11229:SF16">
    <property type="entry name" value="LARGE RIBOSOMAL SUBUNIT PROTEIN UL3C"/>
    <property type="match status" value="1"/>
</dbReference>
<dbReference type="Pfam" id="PF00297">
    <property type="entry name" value="Ribosomal_L3"/>
    <property type="match status" value="1"/>
</dbReference>
<dbReference type="SUPFAM" id="SSF50447">
    <property type="entry name" value="Translation proteins"/>
    <property type="match status" value="1"/>
</dbReference>
<dbReference type="PROSITE" id="PS00474">
    <property type="entry name" value="RIBOSOMAL_L3"/>
    <property type="match status" value="1"/>
</dbReference>
<comment type="function">
    <text evidence="1">One of the primary rRNA binding proteins, it binds directly near the 3'-end of the 23S rRNA, where it nucleates assembly of the 50S subunit.</text>
</comment>
<comment type="subunit">
    <text evidence="1">Part of the 50S ribosomal subunit. Forms a cluster with proteins L14 and L19.</text>
</comment>
<comment type="PTM">
    <text evidence="1">Methylated by PrmB.</text>
</comment>
<comment type="similarity">
    <text evidence="1">Belongs to the universal ribosomal protein uL3 family.</text>
</comment>
<proteinExistence type="inferred from homology"/>
<organism>
    <name type="scientific">Psychrobacter cryohalolentis (strain ATCC BAA-1226 / DSM 17306 / VKM B-2378 / K5)</name>
    <dbReference type="NCBI Taxonomy" id="335284"/>
    <lineage>
        <taxon>Bacteria</taxon>
        <taxon>Pseudomonadati</taxon>
        <taxon>Pseudomonadota</taxon>
        <taxon>Gammaproteobacteria</taxon>
        <taxon>Moraxellales</taxon>
        <taxon>Moraxellaceae</taxon>
        <taxon>Psychrobacter</taxon>
    </lineage>
</organism>